<gene>
    <name type="primary">psmA3</name>
    <name type="ordered locus">SAB0401.2</name>
</gene>
<sequence>MEFVAKLFKFFKDLLGKFLGNN</sequence>
<organism>
    <name type="scientific">Staphylococcus aureus (strain bovine RF122 / ET3-1)</name>
    <dbReference type="NCBI Taxonomy" id="273036"/>
    <lineage>
        <taxon>Bacteria</taxon>
        <taxon>Bacillati</taxon>
        <taxon>Bacillota</taxon>
        <taxon>Bacilli</taxon>
        <taxon>Bacillales</taxon>
        <taxon>Staphylococcaceae</taxon>
        <taxon>Staphylococcus</taxon>
    </lineage>
</organism>
<reference key="1">
    <citation type="journal article" date="2007" name="PLoS ONE">
        <title>Molecular correlates of host specialization in Staphylococcus aureus.</title>
        <authorList>
            <person name="Herron-Olson L."/>
            <person name="Fitzgerald J.R."/>
            <person name="Musser J.M."/>
            <person name="Kapur V."/>
        </authorList>
    </citation>
    <scope>NUCLEOTIDE SEQUENCE [LARGE SCALE GENOMIC DNA]</scope>
    <source>
        <strain>bovine RF122 / ET3-1</strain>
    </source>
</reference>
<name>PSMA3_STAAB</name>
<comment type="function">
    <text evidence="1">Peptide which can recruit, activate and subsequently lyse neutrophils, thus eliminating the main cellular defense against infection.</text>
</comment>
<comment type="similarity">
    <text evidence="2">Belongs to the phenol-soluble modulin alpha peptides family.</text>
</comment>
<dbReference type="EMBL" id="AJ938182">
    <property type="status" value="NOT_ANNOTATED_CDS"/>
    <property type="molecule type" value="Genomic_DNA"/>
</dbReference>
<dbReference type="RefSeq" id="WP_014373779.1">
    <property type="nucleotide sequence ID" value="NC_007622.1"/>
</dbReference>
<dbReference type="SMR" id="P0C807"/>
<dbReference type="GO" id="GO:0031640">
    <property type="term" value="P:killing of cells of another organism"/>
    <property type="evidence" value="ECO:0007669"/>
    <property type="project" value="UniProtKB-KW"/>
</dbReference>
<dbReference type="InterPro" id="IPR031429">
    <property type="entry name" value="PSM_alpha"/>
</dbReference>
<dbReference type="InterPro" id="IPR053383">
    <property type="entry name" value="PSM_alpha_peptides"/>
</dbReference>
<dbReference type="NCBIfam" id="NF033426">
    <property type="entry name" value="PSM_alpha_3"/>
    <property type="match status" value="1"/>
</dbReference>
<dbReference type="Pfam" id="PF17063">
    <property type="entry name" value="PSMalpha"/>
    <property type="match status" value="1"/>
</dbReference>
<accession>P0C807</accession>
<keyword id="KW-0204">Cytolysis</keyword>
<keyword id="KW-0843">Virulence</keyword>
<proteinExistence type="inferred from homology"/>
<protein>
    <recommendedName>
        <fullName>Phenol-soluble modulin alpha 3 peptide</fullName>
    </recommendedName>
</protein>
<evidence type="ECO:0000250" key="1">
    <source>
        <dbReference type="UniProtKB" id="A9JX07"/>
    </source>
</evidence>
<evidence type="ECO:0000305" key="2"/>
<feature type="peptide" id="PRO_0000345062" description="Phenol-soluble modulin alpha 3 peptide">
    <location>
        <begin position="1"/>
        <end position="22"/>
    </location>
</feature>